<proteinExistence type="inferred from homology"/>
<comment type="function">
    <text evidence="1">Global transcriptional regulator that plays a key role in stress response and exerts either positive or negative regulation of genes. Acts by interacting with the C-terminal domain of the alpha subunit of the RNA polymerase (RNAP). This interaction can enhance binding of RNAP to the promoter region of target genes and stimulate their transcription, or block interaction of RNAP with activator.</text>
</comment>
<comment type="subunit">
    <text evidence="1">Interacts with the C-terminal domain of the alpha subunit of the RNAP.</text>
</comment>
<comment type="subcellular location">
    <subcellularLocation>
        <location evidence="1">Cytoplasm</location>
    </subcellularLocation>
</comment>
<comment type="similarity">
    <text evidence="1">Belongs to the ArsC family. Spx subfamily.</text>
</comment>
<sequence>MVTLFLSPSCTSCRKARAWLVKHEVDFQEHNIITSPLSRDELMSILSFTENGTEDIISTRSKVFQKLDVDVEELSISDLIDLIAKNPSLLRRPIIMDQKRMQIGFNEDEIRAFLSRDYRKQELRQATIKAEIEG</sequence>
<evidence type="ECO:0000255" key="1">
    <source>
        <dbReference type="HAMAP-Rule" id="MF_01132"/>
    </source>
</evidence>
<protein>
    <recommendedName>
        <fullName evidence="1">Global transcriptional regulator Spx</fullName>
    </recommendedName>
</protein>
<organism>
    <name type="scientific">Streptococcus pyogenes serotype M3 (strain SSI-1)</name>
    <dbReference type="NCBI Taxonomy" id="193567"/>
    <lineage>
        <taxon>Bacteria</taxon>
        <taxon>Bacillati</taxon>
        <taxon>Bacillota</taxon>
        <taxon>Bacilli</taxon>
        <taxon>Lactobacillales</taxon>
        <taxon>Streptococcaceae</taxon>
        <taxon>Streptococcus</taxon>
    </lineage>
</organism>
<feature type="chain" id="PRO_0000411279" description="Global transcriptional regulator Spx">
    <location>
        <begin position="1"/>
        <end position="134"/>
    </location>
</feature>
<feature type="disulfide bond" description="Redox-active" evidence="1">
    <location>
        <begin position="10"/>
        <end position="13"/>
    </location>
</feature>
<dbReference type="EMBL" id="BA000034">
    <property type="protein sequence ID" value="BAC64180.1"/>
    <property type="molecule type" value="Genomic_DNA"/>
</dbReference>
<dbReference type="RefSeq" id="WP_002984496.1">
    <property type="nucleotide sequence ID" value="NC_004606.1"/>
</dbReference>
<dbReference type="SMR" id="P0CZ83"/>
<dbReference type="KEGG" id="sps:SPs1085"/>
<dbReference type="HOGENOM" id="CLU_116644_1_1_9"/>
<dbReference type="GO" id="GO:0005737">
    <property type="term" value="C:cytoplasm"/>
    <property type="evidence" value="ECO:0007669"/>
    <property type="project" value="UniProtKB-SubCell"/>
</dbReference>
<dbReference type="GO" id="GO:0045892">
    <property type="term" value="P:negative regulation of DNA-templated transcription"/>
    <property type="evidence" value="ECO:0007669"/>
    <property type="project" value="InterPro"/>
</dbReference>
<dbReference type="CDD" id="cd03032">
    <property type="entry name" value="ArsC_Spx"/>
    <property type="match status" value="1"/>
</dbReference>
<dbReference type="Gene3D" id="3.40.30.10">
    <property type="entry name" value="Glutaredoxin"/>
    <property type="match status" value="1"/>
</dbReference>
<dbReference type="HAMAP" id="MF_01132">
    <property type="entry name" value="Spx"/>
    <property type="match status" value="1"/>
</dbReference>
<dbReference type="InterPro" id="IPR006660">
    <property type="entry name" value="Arsenate_reductase-like"/>
</dbReference>
<dbReference type="InterPro" id="IPR023731">
    <property type="entry name" value="Spx"/>
</dbReference>
<dbReference type="InterPro" id="IPR036249">
    <property type="entry name" value="Thioredoxin-like_sf"/>
</dbReference>
<dbReference type="InterPro" id="IPR006504">
    <property type="entry name" value="Tscrpt_reg_Spx/MgsR"/>
</dbReference>
<dbReference type="NCBIfam" id="TIGR01617">
    <property type="entry name" value="arsC_related"/>
    <property type="match status" value="1"/>
</dbReference>
<dbReference type="NCBIfam" id="NF002459">
    <property type="entry name" value="PRK01655.1"/>
    <property type="match status" value="1"/>
</dbReference>
<dbReference type="PANTHER" id="PTHR30041">
    <property type="entry name" value="ARSENATE REDUCTASE"/>
    <property type="match status" value="1"/>
</dbReference>
<dbReference type="PANTHER" id="PTHR30041:SF7">
    <property type="entry name" value="GLOBAL TRANSCRIPTIONAL REGULATOR SPX"/>
    <property type="match status" value="1"/>
</dbReference>
<dbReference type="Pfam" id="PF03960">
    <property type="entry name" value="ArsC"/>
    <property type="match status" value="1"/>
</dbReference>
<dbReference type="SUPFAM" id="SSF52833">
    <property type="entry name" value="Thioredoxin-like"/>
    <property type="match status" value="1"/>
</dbReference>
<dbReference type="PROSITE" id="PS51353">
    <property type="entry name" value="ARSC"/>
    <property type="match status" value="1"/>
</dbReference>
<accession>P0CZ83</accession>
<accession>Q8K7C0</accession>
<reference key="1">
    <citation type="journal article" date="2003" name="Genome Res.">
        <title>Genome sequence of an M3 strain of Streptococcus pyogenes reveals a large-scale genomic rearrangement in invasive strains and new insights into phage evolution.</title>
        <authorList>
            <person name="Nakagawa I."/>
            <person name="Kurokawa K."/>
            <person name="Yamashita A."/>
            <person name="Nakata M."/>
            <person name="Tomiyasu Y."/>
            <person name="Okahashi N."/>
            <person name="Kawabata S."/>
            <person name="Yamazaki K."/>
            <person name="Shiba T."/>
            <person name="Yasunaga T."/>
            <person name="Hayashi H."/>
            <person name="Hattori M."/>
            <person name="Hamada S."/>
        </authorList>
    </citation>
    <scope>NUCLEOTIDE SEQUENCE [LARGE SCALE GENOMIC DNA]</scope>
    <source>
        <strain>SSI-1</strain>
    </source>
</reference>
<gene>
    <name evidence="1" type="primary">spx</name>
    <name type="ordered locus">SPs1085</name>
</gene>
<name>SPX_STRPQ</name>
<keyword id="KW-0963">Cytoplasm</keyword>
<keyword id="KW-1015">Disulfide bond</keyword>
<keyword id="KW-0676">Redox-active center</keyword>
<keyword id="KW-0804">Transcription</keyword>
<keyword id="KW-0805">Transcription regulation</keyword>